<accession>Q87EV1</accession>
<protein>
    <recommendedName>
        <fullName evidence="1">Small ribosomal subunit protein uS15</fullName>
    </recommendedName>
    <alternativeName>
        <fullName evidence="3">30S ribosomal protein S15</fullName>
    </alternativeName>
</protein>
<keyword id="KW-1185">Reference proteome</keyword>
<keyword id="KW-0687">Ribonucleoprotein</keyword>
<keyword id="KW-0689">Ribosomal protein</keyword>
<keyword id="KW-0694">RNA-binding</keyword>
<keyword id="KW-0699">rRNA-binding</keyword>
<name>RS15_XYLFT</name>
<organism>
    <name type="scientific">Xylella fastidiosa (strain Temecula1 / ATCC 700964)</name>
    <dbReference type="NCBI Taxonomy" id="183190"/>
    <lineage>
        <taxon>Bacteria</taxon>
        <taxon>Pseudomonadati</taxon>
        <taxon>Pseudomonadota</taxon>
        <taxon>Gammaproteobacteria</taxon>
        <taxon>Lysobacterales</taxon>
        <taxon>Lysobacteraceae</taxon>
        <taxon>Xylella</taxon>
    </lineage>
</organism>
<feature type="chain" id="PRO_0000115596" description="Small ribosomal subunit protein uS15">
    <location>
        <begin position="1"/>
        <end position="86"/>
    </location>
</feature>
<feature type="region of interest" description="Disordered" evidence="2">
    <location>
        <begin position="1"/>
        <end position="21"/>
    </location>
</feature>
<feature type="compositionally biased region" description="Polar residues" evidence="2">
    <location>
        <begin position="1"/>
        <end position="10"/>
    </location>
</feature>
<gene>
    <name evidence="1" type="primary">rpsO</name>
    <name type="ordered locus">PD_0197</name>
</gene>
<dbReference type="EMBL" id="AE009442">
    <property type="protein sequence ID" value="AAO28088.1"/>
    <property type="molecule type" value="Genomic_DNA"/>
</dbReference>
<dbReference type="RefSeq" id="WP_004572949.1">
    <property type="nucleotide sequence ID" value="NC_004556.1"/>
</dbReference>
<dbReference type="SMR" id="Q87EV1"/>
<dbReference type="GeneID" id="93903888"/>
<dbReference type="KEGG" id="xft:PD_0197"/>
<dbReference type="HOGENOM" id="CLU_148518_1_0_6"/>
<dbReference type="Proteomes" id="UP000002516">
    <property type="component" value="Chromosome"/>
</dbReference>
<dbReference type="GO" id="GO:0022627">
    <property type="term" value="C:cytosolic small ribosomal subunit"/>
    <property type="evidence" value="ECO:0007669"/>
    <property type="project" value="TreeGrafter"/>
</dbReference>
<dbReference type="GO" id="GO:0019843">
    <property type="term" value="F:rRNA binding"/>
    <property type="evidence" value="ECO:0007669"/>
    <property type="project" value="UniProtKB-UniRule"/>
</dbReference>
<dbReference type="GO" id="GO:0003735">
    <property type="term" value="F:structural constituent of ribosome"/>
    <property type="evidence" value="ECO:0007669"/>
    <property type="project" value="InterPro"/>
</dbReference>
<dbReference type="GO" id="GO:0006412">
    <property type="term" value="P:translation"/>
    <property type="evidence" value="ECO:0007669"/>
    <property type="project" value="UniProtKB-UniRule"/>
</dbReference>
<dbReference type="CDD" id="cd00353">
    <property type="entry name" value="Ribosomal_S15p_S13e"/>
    <property type="match status" value="1"/>
</dbReference>
<dbReference type="FunFam" id="1.10.287.10:FF:000002">
    <property type="entry name" value="30S ribosomal protein S15"/>
    <property type="match status" value="1"/>
</dbReference>
<dbReference type="Gene3D" id="6.10.250.3130">
    <property type="match status" value="1"/>
</dbReference>
<dbReference type="Gene3D" id="1.10.287.10">
    <property type="entry name" value="S15/NS1, RNA-binding"/>
    <property type="match status" value="1"/>
</dbReference>
<dbReference type="HAMAP" id="MF_01343_B">
    <property type="entry name" value="Ribosomal_uS15_B"/>
    <property type="match status" value="1"/>
</dbReference>
<dbReference type="InterPro" id="IPR000589">
    <property type="entry name" value="Ribosomal_uS15"/>
</dbReference>
<dbReference type="InterPro" id="IPR005290">
    <property type="entry name" value="Ribosomal_uS15_bac-type"/>
</dbReference>
<dbReference type="InterPro" id="IPR009068">
    <property type="entry name" value="uS15_NS1_RNA-bd_sf"/>
</dbReference>
<dbReference type="NCBIfam" id="TIGR00952">
    <property type="entry name" value="S15_bact"/>
    <property type="match status" value="1"/>
</dbReference>
<dbReference type="PANTHER" id="PTHR23321">
    <property type="entry name" value="RIBOSOMAL PROTEIN S15, BACTERIAL AND ORGANELLAR"/>
    <property type="match status" value="1"/>
</dbReference>
<dbReference type="PANTHER" id="PTHR23321:SF26">
    <property type="entry name" value="SMALL RIBOSOMAL SUBUNIT PROTEIN US15M"/>
    <property type="match status" value="1"/>
</dbReference>
<dbReference type="Pfam" id="PF00312">
    <property type="entry name" value="Ribosomal_S15"/>
    <property type="match status" value="1"/>
</dbReference>
<dbReference type="SMART" id="SM01387">
    <property type="entry name" value="Ribosomal_S15"/>
    <property type="match status" value="1"/>
</dbReference>
<dbReference type="SUPFAM" id="SSF47060">
    <property type="entry name" value="S15/NS1 RNA-binding domain"/>
    <property type="match status" value="1"/>
</dbReference>
<dbReference type="PROSITE" id="PS00362">
    <property type="entry name" value="RIBOSOMAL_S15"/>
    <property type="match status" value="1"/>
</dbReference>
<proteinExistence type="inferred from homology"/>
<comment type="function">
    <text evidence="1">One of the primary rRNA binding proteins, it binds directly to 16S rRNA where it helps nucleate assembly of the platform of the 30S subunit by binding and bridging several RNA helices of the 16S rRNA.</text>
</comment>
<comment type="function">
    <text evidence="1">Forms an intersubunit bridge (bridge B4) with the 23S rRNA of the 50S subunit in the ribosome.</text>
</comment>
<comment type="subunit">
    <text evidence="1">Part of the 30S ribosomal subunit. Forms a bridge to the 50S subunit in the 70S ribosome, contacting the 23S rRNA.</text>
</comment>
<comment type="similarity">
    <text evidence="1">Belongs to the universal ribosomal protein uS15 family.</text>
</comment>
<sequence length="86" mass="10201">MSIDTQSIIENNKRSAHDTGSPEVQVALLTARIELLTKHFKIHKKDHHSRRGLLQMVNRRRSLLDYLNKKENERYKLLIEKLGLRR</sequence>
<reference key="1">
    <citation type="journal article" date="2003" name="J. Bacteriol.">
        <title>Comparative analyses of the complete genome sequences of Pierce's disease and citrus variegated chlorosis strains of Xylella fastidiosa.</title>
        <authorList>
            <person name="Van Sluys M.A."/>
            <person name="de Oliveira M.C."/>
            <person name="Monteiro-Vitorello C.B."/>
            <person name="Miyaki C.Y."/>
            <person name="Furlan L.R."/>
            <person name="Camargo L.E.A."/>
            <person name="da Silva A.C.R."/>
            <person name="Moon D.H."/>
            <person name="Takita M.A."/>
            <person name="Lemos E.G.M."/>
            <person name="Machado M.A."/>
            <person name="Ferro M.I.T."/>
            <person name="da Silva F.R."/>
            <person name="Goldman M.H.S."/>
            <person name="Goldman G.H."/>
            <person name="Lemos M.V.F."/>
            <person name="El-Dorry H."/>
            <person name="Tsai S.M."/>
            <person name="Carrer H."/>
            <person name="Carraro D.M."/>
            <person name="de Oliveira R.C."/>
            <person name="Nunes L.R."/>
            <person name="Siqueira W.J."/>
            <person name="Coutinho L.L."/>
            <person name="Kimura E.T."/>
            <person name="Ferro E.S."/>
            <person name="Harakava R."/>
            <person name="Kuramae E.E."/>
            <person name="Marino C.L."/>
            <person name="Giglioti E."/>
            <person name="Abreu I.L."/>
            <person name="Alves L.M.C."/>
            <person name="do Amaral A.M."/>
            <person name="Baia G.S."/>
            <person name="Blanco S.R."/>
            <person name="Brito M.S."/>
            <person name="Cannavan F.S."/>
            <person name="Celestino A.V."/>
            <person name="da Cunha A.F."/>
            <person name="Fenille R.C."/>
            <person name="Ferro J.A."/>
            <person name="Formighieri E.F."/>
            <person name="Kishi L.T."/>
            <person name="Leoni S.G."/>
            <person name="Oliveira A.R."/>
            <person name="Rosa V.E. Jr."/>
            <person name="Sassaki F.T."/>
            <person name="Sena J.A.D."/>
            <person name="de Souza A.A."/>
            <person name="Truffi D."/>
            <person name="Tsukumo F."/>
            <person name="Yanai G.M."/>
            <person name="Zaros L.G."/>
            <person name="Civerolo E.L."/>
            <person name="Simpson A.J.G."/>
            <person name="Almeida N.F. Jr."/>
            <person name="Setubal J.C."/>
            <person name="Kitajima J.P."/>
        </authorList>
    </citation>
    <scope>NUCLEOTIDE SEQUENCE [LARGE SCALE GENOMIC DNA]</scope>
    <source>
        <strain>Temecula1 / ATCC 700964</strain>
    </source>
</reference>
<evidence type="ECO:0000255" key="1">
    <source>
        <dbReference type="HAMAP-Rule" id="MF_01343"/>
    </source>
</evidence>
<evidence type="ECO:0000256" key="2">
    <source>
        <dbReference type="SAM" id="MobiDB-lite"/>
    </source>
</evidence>
<evidence type="ECO:0000305" key="3"/>